<comment type="function">
    <text evidence="1">The enzymes which catalyze the reversible phosphorolysis of pyrimidine nucleosides are involved in the degradation of these compounds and in their utilization as carbon and energy sources, or in the rescue of pyrimidine bases for nucleotide synthesis.</text>
</comment>
<comment type="catalytic activity">
    <reaction evidence="1">
        <text>thymidine + phosphate = 2-deoxy-alpha-D-ribose 1-phosphate + thymine</text>
        <dbReference type="Rhea" id="RHEA:16037"/>
        <dbReference type="ChEBI" id="CHEBI:17748"/>
        <dbReference type="ChEBI" id="CHEBI:17821"/>
        <dbReference type="ChEBI" id="CHEBI:43474"/>
        <dbReference type="ChEBI" id="CHEBI:57259"/>
        <dbReference type="EC" id="2.4.2.4"/>
    </reaction>
</comment>
<comment type="pathway">
    <text evidence="1">Pyrimidine metabolism; dTMP biosynthesis via salvage pathway; dTMP from thymine: step 1/2.</text>
</comment>
<comment type="subunit">
    <text evidence="1">Homodimer.</text>
</comment>
<comment type="similarity">
    <text evidence="1">Belongs to the thymidine/pyrimidine-nucleoside phosphorylase family.</text>
</comment>
<organism>
    <name type="scientific">Shigella flexneri serotype 5b (strain 8401)</name>
    <dbReference type="NCBI Taxonomy" id="373384"/>
    <lineage>
        <taxon>Bacteria</taxon>
        <taxon>Pseudomonadati</taxon>
        <taxon>Pseudomonadota</taxon>
        <taxon>Gammaproteobacteria</taxon>
        <taxon>Enterobacterales</taxon>
        <taxon>Enterobacteriaceae</taxon>
        <taxon>Shigella</taxon>
    </lineage>
</organism>
<feature type="chain" id="PRO_1000069676" description="Thymidine phosphorylase">
    <location>
        <begin position="1"/>
        <end position="440"/>
    </location>
</feature>
<name>TYPH_SHIF8</name>
<protein>
    <recommendedName>
        <fullName evidence="1">Thymidine phosphorylase</fullName>
        <ecNumber evidence="1">2.4.2.4</ecNumber>
    </recommendedName>
    <alternativeName>
        <fullName evidence="1">TdRPase</fullName>
    </alternativeName>
</protein>
<dbReference type="EC" id="2.4.2.4" evidence="1"/>
<dbReference type="EMBL" id="CP000266">
    <property type="protein sequence ID" value="ABF06386.1"/>
    <property type="molecule type" value="Genomic_DNA"/>
</dbReference>
<dbReference type="RefSeq" id="WP_000477815.1">
    <property type="nucleotide sequence ID" value="NC_008258.1"/>
</dbReference>
<dbReference type="SMR" id="Q0SX29"/>
<dbReference type="KEGG" id="sfv:SFV_4416"/>
<dbReference type="HOGENOM" id="CLU_025040_0_1_6"/>
<dbReference type="UniPathway" id="UPA00578">
    <property type="reaction ID" value="UER00638"/>
</dbReference>
<dbReference type="Proteomes" id="UP000000659">
    <property type="component" value="Chromosome"/>
</dbReference>
<dbReference type="GO" id="GO:0005829">
    <property type="term" value="C:cytosol"/>
    <property type="evidence" value="ECO:0007669"/>
    <property type="project" value="TreeGrafter"/>
</dbReference>
<dbReference type="GO" id="GO:0004645">
    <property type="term" value="F:1,4-alpha-oligoglucan phosphorylase activity"/>
    <property type="evidence" value="ECO:0007669"/>
    <property type="project" value="InterPro"/>
</dbReference>
<dbReference type="GO" id="GO:0009032">
    <property type="term" value="F:thymidine phosphorylase activity"/>
    <property type="evidence" value="ECO:0007669"/>
    <property type="project" value="UniProtKB-UniRule"/>
</dbReference>
<dbReference type="GO" id="GO:0006206">
    <property type="term" value="P:pyrimidine nucleobase metabolic process"/>
    <property type="evidence" value="ECO:0007669"/>
    <property type="project" value="InterPro"/>
</dbReference>
<dbReference type="GO" id="GO:0046104">
    <property type="term" value="P:thymidine metabolic process"/>
    <property type="evidence" value="ECO:0007669"/>
    <property type="project" value="UniProtKB-UniRule"/>
</dbReference>
<dbReference type="FunFam" id="3.40.1030.10:FF:000001">
    <property type="entry name" value="Thymidine phosphorylase"/>
    <property type="match status" value="1"/>
</dbReference>
<dbReference type="FunFam" id="3.90.1170.30:FF:000001">
    <property type="entry name" value="Thymidine phosphorylase"/>
    <property type="match status" value="1"/>
</dbReference>
<dbReference type="Gene3D" id="3.40.1030.10">
    <property type="entry name" value="Nucleoside phosphorylase/phosphoribosyltransferase catalytic domain"/>
    <property type="match status" value="1"/>
</dbReference>
<dbReference type="Gene3D" id="3.90.1170.30">
    <property type="entry name" value="Pyrimidine nucleoside phosphorylase-like, C-terminal domain"/>
    <property type="match status" value="1"/>
</dbReference>
<dbReference type="Gene3D" id="1.20.970.10">
    <property type="entry name" value="Transferase, Pyrimidine Nucleoside Phosphorylase, Chain C"/>
    <property type="match status" value="1"/>
</dbReference>
<dbReference type="HAMAP" id="MF_01628">
    <property type="entry name" value="Thymid_phosp"/>
    <property type="match status" value="1"/>
</dbReference>
<dbReference type="InterPro" id="IPR000312">
    <property type="entry name" value="Glycosyl_Trfase_fam3"/>
</dbReference>
<dbReference type="InterPro" id="IPR017459">
    <property type="entry name" value="Glycosyl_Trfase_fam3_N_dom"/>
</dbReference>
<dbReference type="InterPro" id="IPR036320">
    <property type="entry name" value="Glycosyl_Trfase_fam3_N_dom_sf"/>
</dbReference>
<dbReference type="InterPro" id="IPR035902">
    <property type="entry name" value="Nuc_phospho_transferase"/>
</dbReference>
<dbReference type="InterPro" id="IPR036566">
    <property type="entry name" value="PYNP-like_C_sf"/>
</dbReference>
<dbReference type="InterPro" id="IPR013102">
    <property type="entry name" value="PYNP_C"/>
</dbReference>
<dbReference type="InterPro" id="IPR018090">
    <property type="entry name" value="Pyrmidine_PPas_bac/euk"/>
</dbReference>
<dbReference type="InterPro" id="IPR017872">
    <property type="entry name" value="Pyrmidine_PPase_CS"/>
</dbReference>
<dbReference type="InterPro" id="IPR000053">
    <property type="entry name" value="Thymidine/pyrmidine_PPase"/>
</dbReference>
<dbReference type="InterPro" id="IPR013465">
    <property type="entry name" value="Thymidine_Pase"/>
</dbReference>
<dbReference type="NCBIfam" id="NF004490">
    <property type="entry name" value="PRK05820.1"/>
    <property type="match status" value="1"/>
</dbReference>
<dbReference type="NCBIfam" id="TIGR02643">
    <property type="entry name" value="T_phosphoryl"/>
    <property type="match status" value="1"/>
</dbReference>
<dbReference type="NCBIfam" id="TIGR02644">
    <property type="entry name" value="Y_phosphoryl"/>
    <property type="match status" value="1"/>
</dbReference>
<dbReference type="PANTHER" id="PTHR10515">
    <property type="entry name" value="THYMIDINE PHOSPHORYLASE"/>
    <property type="match status" value="1"/>
</dbReference>
<dbReference type="PANTHER" id="PTHR10515:SF0">
    <property type="entry name" value="THYMIDINE PHOSPHORYLASE"/>
    <property type="match status" value="1"/>
</dbReference>
<dbReference type="Pfam" id="PF02885">
    <property type="entry name" value="Glycos_trans_3N"/>
    <property type="match status" value="1"/>
</dbReference>
<dbReference type="Pfam" id="PF00591">
    <property type="entry name" value="Glycos_transf_3"/>
    <property type="match status" value="1"/>
</dbReference>
<dbReference type="Pfam" id="PF07831">
    <property type="entry name" value="PYNP_C"/>
    <property type="match status" value="1"/>
</dbReference>
<dbReference type="PIRSF" id="PIRSF000478">
    <property type="entry name" value="TP_PyNP"/>
    <property type="match status" value="1"/>
</dbReference>
<dbReference type="SMART" id="SM00941">
    <property type="entry name" value="PYNP_C"/>
    <property type="match status" value="1"/>
</dbReference>
<dbReference type="SUPFAM" id="SSF52418">
    <property type="entry name" value="Nucleoside phosphorylase/phosphoribosyltransferase catalytic domain"/>
    <property type="match status" value="1"/>
</dbReference>
<dbReference type="SUPFAM" id="SSF47648">
    <property type="entry name" value="Nucleoside phosphorylase/phosphoribosyltransferase N-terminal domain"/>
    <property type="match status" value="1"/>
</dbReference>
<dbReference type="SUPFAM" id="SSF54680">
    <property type="entry name" value="Pyrimidine nucleoside phosphorylase C-terminal domain"/>
    <property type="match status" value="1"/>
</dbReference>
<dbReference type="PROSITE" id="PS00647">
    <property type="entry name" value="THYMID_PHOSPHORYLASE"/>
    <property type="match status" value="1"/>
</dbReference>
<sequence length="440" mass="47142">MFLAQEIIRKKRDGHALSDEEIRFFINGIRDNTISEGQIAALAMTIFFHDMTMPERVSLTMAMRDSGTVLDWKSLHLNGPIVDKHSTGGVGDVTSLMLGPMVAACGGYIPMISGRGLGHTGGTLDKLESIPGFDIFPDDNRFREIIKDVGVAIIGQTSSLAPADKRFYATRDITATVDSIPLITASILAKKLAEGLDALVMDVKVGSGAFMPTYELSEALAEAIVGVANGAGVRTTALLTDMNQVLASSAGNAVEVREAVQFLTGEYRNPRLFDVTMALCVEMLISGKLAKDDAEARAKLQAVLDNGKAAEVFGRMVAAQKGPTDFVENYAKYLPTAMLTKAVYADTEGFVSEMDTRALGMAVVAMGGGRRQASDTIDYSVGFTDMARLGDQVDGQRPLAVILAKDENSWQEAAKAVKAAIKLADNAPESTPTVYRRISE</sequence>
<reference key="1">
    <citation type="journal article" date="2006" name="BMC Genomics">
        <title>Complete genome sequence of Shigella flexneri 5b and comparison with Shigella flexneri 2a.</title>
        <authorList>
            <person name="Nie H."/>
            <person name="Yang F."/>
            <person name="Zhang X."/>
            <person name="Yang J."/>
            <person name="Chen L."/>
            <person name="Wang J."/>
            <person name="Xiong Z."/>
            <person name="Peng J."/>
            <person name="Sun L."/>
            <person name="Dong J."/>
            <person name="Xue Y."/>
            <person name="Xu X."/>
            <person name="Chen S."/>
            <person name="Yao Z."/>
            <person name="Shen Y."/>
            <person name="Jin Q."/>
        </authorList>
    </citation>
    <scope>NUCLEOTIDE SEQUENCE [LARGE SCALE GENOMIC DNA]</scope>
    <source>
        <strain>8401</strain>
    </source>
</reference>
<keyword id="KW-0328">Glycosyltransferase</keyword>
<keyword id="KW-0808">Transferase</keyword>
<accession>Q0SX29</accession>
<evidence type="ECO:0000255" key="1">
    <source>
        <dbReference type="HAMAP-Rule" id="MF_01628"/>
    </source>
</evidence>
<proteinExistence type="inferred from homology"/>
<gene>
    <name evidence="1" type="primary">deoA</name>
    <name type="ordered locus">SFV_4416</name>
</gene>